<dbReference type="EC" id="2.3.1.47"/>
<dbReference type="EMBL" id="CP001189">
    <property type="protein sequence ID" value="ACI49942.1"/>
    <property type="status" value="ALT_INIT"/>
    <property type="molecule type" value="Genomic_DNA"/>
</dbReference>
<dbReference type="EMBL" id="AM889285">
    <property type="protein sequence ID" value="CAP55863.1"/>
    <property type="status" value="ALT_INIT"/>
    <property type="molecule type" value="Genomic_DNA"/>
</dbReference>
<dbReference type="RefSeq" id="WP_173363371.1">
    <property type="nucleotide sequence ID" value="NC_010125.1"/>
</dbReference>
<dbReference type="SMR" id="A9HJ57"/>
<dbReference type="STRING" id="272568.GDI1920"/>
<dbReference type="KEGG" id="gdi:GDI1920"/>
<dbReference type="KEGG" id="gdj:Gdia_0142"/>
<dbReference type="eggNOG" id="COG0156">
    <property type="taxonomic scope" value="Bacteria"/>
</dbReference>
<dbReference type="HOGENOM" id="CLU_015846_11_2_5"/>
<dbReference type="UniPathway" id="UPA00078"/>
<dbReference type="Proteomes" id="UP000001176">
    <property type="component" value="Chromosome"/>
</dbReference>
<dbReference type="GO" id="GO:0008710">
    <property type="term" value="F:8-amino-7-oxononanoate synthase activity"/>
    <property type="evidence" value="ECO:0007669"/>
    <property type="project" value="UniProtKB-EC"/>
</dbReference>
<dbReference type="GO" id="GO:0030170">
    <property type="term" value="F:pyridoxal phosphate binding"/>
    <property type="evidence" value="ECO:0007669"/>
    <property type="project" value="InterPro"/>
</dbReference>
<dbReference type="GO" id="GO:0009102">
    <property type="term" value="P:biotin biosynthetic process"/>
    <property type="evidence" value="ECO:0007669"/>
    <property type="project" value="UniProtKB-UniPathway"/>
</dbReference>
<dbReference type="Gene3D" id="3.90.1150.10">
    <property type="entry name" value="Aspartate Aminotransferase, domain 1"/>
    <property type="match status" value="1"/>
</dbReference>
<dbReference type="Gene3D" id="3.40.640.10">
    <property type="entry name" value="Type I PLP-dependent aspartate aminotransferase-like (Major domain)"/>
    <property type="match status" value="1"/>
</dbReference>
<dbReference type="InterPro" id="IPR001917">
    <property type="entry name" value="Aminotrans_II_pyridoxalP_BS"/>
</dbReference>
<dbReference type="InterPro" id="IPR004839">
    <property type="entry name" value="Aminotransferase_I/II_large"/>
</dbReference>
<dbReference type="InterPro" id="IPR050087">
    <property type="entry name" value="AON_synthase_class-II"/>
</dbReference>
<dbReference type="InterPro" id="IPR015424">
    <property type="entry name" value="PyrdxlP-dep_Trfase"/>
</dbReference>
<dbReference type="InterPro" id="IPR015421">
    <property type="entry name" value="PyrdxlP-dep_Trfase_major"/>
</dbReference>
<dbReference type="InterPro" id="IPR015422">
    <property type="entry name" value="PyrdxlP-dep_Trfase_small"/>
</dbReference>
<dbReference type="PANTHER" id="PTHR13693:SF100">
    <property type="entry name" value="8-AMINO-7-OXONONANOATE SYNTHASE"/>
    <property type="match status" value="1"/>
</dbReference>
<dbReference type="PANTHER" id="PTHR13693">
    <property type="entry name" value="CLASS II AMINOTRANSFERASE/8-AMINO-7-OXONONANOATE SYNTHASE"/>
    <property type="match status" value="1"/>
</dbReference>
<dbReference type="Pfam" id="PF00155">
    <property type="entry name" value="Aminotran_1_2"/>
    <property type="match status" value="1"/>
</dbReference>
<dbReference type="SUPFAM" id="SSF53383">
    <property type="entry name" value="PLP-dependent transferases"/>
    <property type="match status" value="1"/>
</dbReference>
<dbReference type="PROSITE" id="PS00599">
    <property type="entry name" value="AA_TRANSFER_CLASS_2"/>
    <property type="match status" value="1"/>
</dbReference>
<comment type="function">
    <text evidence="1">Catalyzes the decarboxylative condensation of pimeloyl-[acyl-carrier protein] and L-alanine to produce 8-amino-7-oxononanoate (AON), [acyl-carrier protein], and carbon dioxide.</text>
</comment>
<comment type="catalytic activity">
    <reaction>
        <text>6-carboxyhexanoyl-[ACP] + L-alanine + H(+) = (8S)-8-amino-7-oxononanoate + holo-[ACP] + CO2</text>
        <dbReference type="Rhea" id="RHEA:42288"/>
        <dbReference type="Rhea" id="RHEA-COMP:9685"/>
        <dbReference type="Rhea" id="RHEA-COMP:9955"/>
        <dbReference type="ChEBI" id="CHEBI:15378"/>
        <dbReference type="ChEBI" id="CHEBI:16526"/>
        <dbReference type="ChEBI" id="CHEBI:57972"/>
        <dbReference type="ChEBI" id="CHEBI:64479"/>
        <dbReference type="ChEBI" id="CHEBI:78846"/>
        <dbReference type="ChEBI" id="CHEBI:149468"/>
        <dbReference type="EC" id="2.3.1.47"/>
    </reaction>
</comment>
<comment type="cofactor">
    <cofactor evidence="1">
        <name>pyridoxal 5'-phosphate</name>
        <dbReference type="ChEBI" id="CHEBI:597326"/>
    </cofactor>
</comment>
<comment type="pathway">
    <text>Cofactor biosynthesis; biotin biosynthesis.</text>
</comment>
<comment type="subunit">
    <text evidence="1">Homodimer.</text>
</comment>
<comment type="similarity">
    <text evidence="2">Belongs to the class-II pyridoxal-phosphate-dependent aminotransferase family. BioF subfamily.</text>
</comment>
<comment type="sequence caution" evidence="2">
    <conflict type="erroneous initiation">
        <sequence resource="EMBL-CDS" id="ACI49942"/>
    </conflict>
    <text>Extended N-terminus.</text>
</comment>
<comment type="sequence caution" evidence="2">
    <conflict type="erroneous initiation">
        <sequence resource="EMBL-CDS" id="CAP55863"/>
    </conflict>
    <text>Extended N-terminus.</text>
</comment>
<gene>
    <name type="ordered locus">GDI1920</name>
    <name type="ordered locus">Gdia_0142</name>
</gene>
<reference key="1">
    <citation type="journal article" date="2009" name="BMC Genomics">
        <title>Complete genome sequence of the sugarcane nitrogen-fixing endophyte Gluconacetobacter diazotrophicus Pal5.</title>
        <authorList>
            <person name="Bertalan M."/>
            <person name="Albano R."/>
            <person name="de Padua V."/>
            <person name="Rouws L."/>
            <person name="Rojas C."/>
            <person name="Hemerly A."/>
            <person name="Teixeira K."/>
            <person name="Schwab S."/>
            <person name="Araujo J."/>
            <person name="Oliveira A."/>
            <person name="Franca L."/>
            <person name="Magalhaes V."/>
            <person name="Alqueres S."/>
            <person name="Cardoso A."/>
            <person name="Almeida W."/>
            <person name="Loureiro M.M."/>
            <person name="Nogueira E."/>
            <person name="Cidade D."/>
            <person name="Oliveira D."/>
            <person name="Simao T."/>
            <person name="Macedo J."/>
            <person name="Valadao A."/>
            <person name="Dreschsel M."/>
            <person name="Freitas F."/>
            <person name="Vidal M."/>
            <person name="Guedes H."/>
            <person name="Rodrigues E."/>
            <person name="Meneses C."/>
            <person name="Brioso P."/>
            <person name="Pozzer L."/>
            <person name="Figueiredo D."/>
            <person name="Montano H."/>
            <person name="Junior J."/>
            <person name="de Souza Filho G."/>
            <person name="Martin Quintana Flores V."/>
            <person name="Ferreira B."/>
            <person name="Branco A."/>
            <person name="Gonzalez P."/>
            <person name="Guillobel H."/>
            <person name="Lemos M."/>
            <person name="Seibel L."/>
            <person name="Macedo J."/>
            <person name="Alves-Ferreira M."/>
            <person name="Sachetto-Martins G."/>
            <person name="Coelho A."/>
            <person name="Santos E."/>
            <person name="Amaral G."/>
            <person name="Neves A."/>
            <person name="Pacheco A.B."/>
            <person name="Carvalho D."/>
            <person name="Lery L."/>
            <person name="Bisch P."/>
            <person name="Rossle S.C."/>
            <person name="Urmenyi T."/>
            <person name="Rael Pereira A."/>
            <person name="Silva R."/>
            <person name="Rondinelli E."/>
            <person name="von Kruger W."/>
            <person name="Martins O."/>
            <person name="Baldani J.I."/>
            <person name="Ferreira P.C."/>
        </authorList>
    </citation>
    <scope>NUCLEOTIDE SEQUENCE [LARGE SCALE GENOMIC DNA]</scope>
    <source>
        <strain>ATCC 49037 / DSM 5601 / CCUG 37298 / CIP 103539 / LMG 7603 / PAl5</strain>
    </source>
</reference>
<reference key="2">
    <citation type="journal article" date="2010" name="Stand. Genomic Sci.">
        <title>Two genome sequences of the same bacterial strain, Gluconacetobacter diazotrophicus PAl 5, suggest a new standard in genome sequence submission.</title>
        <authorList>
            <person name="Giongo A."/>
            <person name="Tyler H.L."/>
            <person name="Zipperer U.N."/>
            <person name="Triplett E.W."/>
        </authorList>
    </citation>
    <scope>NUCLEOTIDE SEQUENCE [LARGE SCALE GENOMIC DNA]</scope>
    <source>
        <strain>ATCC 49037 / DSM 5601 / CCUG 37298 / CIP 103539 / LMG 7603 / PAl5</strain>
    </source>
</reference>
<accession>A9HJ57</accession>
<accession>B5ZK03</accession>
<organism>
    <name type="scientific">Gluconacetobacter diazotrophicus (strain ATCC 49037 / DSM 5601 / CCUG 37298 / CIP 103539 / LMG 7603 / PAl5)</name>
    <dbReference type="NCBI Taxonomy" id="272568"/>
    <lineage>
        <taxon>Bacteria</taxon>
        <taxon>Pseudomonadati</taxon>
        <taxon>Pseudomonadota</taxon>
        <taxon>Alphaproteobacteria</taxon>
        <taxon>Acetobacterales</taxon>
        <taxon>Acetobacteraceae</taxon>
        <taxon>Gluconacetobacter</taxon>
    </lineage>
</organism>
<evidence type="ECO:0000250" key="1"/>
<evidence type="ECO:0000305" key="2"/>
<keyword id="KW-0012">Acyltransferase</keyword>
<keyword id="KW-0093">Biotin biosynthesis</keyword>
<keyword id="KW-0663">Pyridoxal phosphate</keyword>
<keyword id="KW-1185">Reference proteome</keyword>
<keyword id="KW-0808">Transferase</keyword>
<sequence length="398" mass="42088">MTRFDPFFQTALDDLDRRHLKRVLSPVDRDGPVIVRRDGASLLDFSSNDYLGLSHHPALRARAIDWTERFGIGSGASRLVTGTSEQYRQVEARLARFKGTEAALLLASGWQANAAVLPALLRISAAQTGEPALVFTDRLNHASLHHGCQAAGVRQIRFAHNDLGHLEHLLAQRQAQRGLRFIVTESVFSMDGDRADVAGLRTLADRYGAFLYLDEAHATGVLGPQGRGLSAEAGGVDLAMGTFSKALGGFGAYVAGSRAVCDWLVSTCSGFIYTTALPPGVLGVIDAALDLVPTLDAERAHLAGLADRMRAGAGALGWSTGPSSTQIVPVIVGAADRALTLARALAARGMLGTAIRPPTVPAGSARIRVALSAAHDETMVDRLLSALEDAAREHGIAP</sequence>
<name>BIOF_GLUDA</name>
<proteinExistence type="inferred from homology"/>
<feature type="chain" id="PRO_0000381001" description="8-amino-7-oxononanoate synthase">
    <location>
        <begin position="1"/>
        <end position="398"/>
    </location>
</feature>
<feature type="binding site" evidence="1">
    <location>
        <position position="22"/>
    </location>
    <ligand>
        <name>substrate</name>
    </ligand>
</feature>
<feature type="binding site" evidence="1">
    <location>
        <position position="29"/>
    </location>
    <ligand>
        <name>substrate</name>
    </ligand>
</feature>
<feature type="binding site" evidence="1">
    <location>
        <begin position="109"/>
        <end position="110"/>
    </location>
    <ligand>
        <name>pyridoxal 5'-phosphate</name>
        <dbReference type="ChEBI" id="CHEBI:597326"/>
    </ligand>
</feature>
<feature type="binding site" evidence="1">
    <location>
        <position position="141"/>
    </location>
    <ligand>
        <name>substrate</name>
    </ligand>
</feature>
<feature type="binding site" evidence="1">
    <location>
        <position position="189"/>
    </location>
    <ligand>
        <name>pyridoxal 5'-phosphate</name>
        <dbReference type="ChEBI" id="CHEBI:597326"/>
    </ligand>
</feature>
<feature type="binding site" evidence="1">
    <location>
        <begin position="214"/>
        <end position="217"/>
    </location>
    <ligand>
        <name>pyridoxal 5'-phosphate</name>
        <dbReference type="ChEBI" id="CHEBI:597326"/>
    </ligand>
</feature>
<feature type="binding site" evidence="1">
    <location>
        <begin position="242"/>
        <end position="245"/>
    </location>
    <ligand>
        <name>pyridoxal 5'-phosphate</name>
        <dbReference type="ChEBI" id="CHEBI:597326"/>
    </ligand>
</feature>
<feature type="binding site" evidence="1">
    <location>
        <position position="359"/>
    </location>
    <ligand>
        <name>substrate</name>
    </ligand>
</feature>
<feature type="modified residue" description="N6-(pyridoxal phosphate)lysine" evidence="1">
    <location>
        <position position="245"/>
    </location>
</feature>
<feature type="sequence conflict" description="In Ref. 2; ACI49942." evidence="2" ref="2">
    <original>V</original>
    <variation>A</variation>
    <location>
        <position position="284"/>
    </location>
</feature>
<protein>
    <recommendedName>
        <fullName>8-amino-7-oxononanoate synthase</fullName>
        <shortName>AONS</shortName>
        <ecNumber>2.3.1.47</ecNumber>
    </recommendedName>
    <alternativeName>
        <fullName>7-keto-8-amino-pelargonic acid synthase</fullName>
        <shortName>7-KAP synthase</shortName>
        <shortName>KAPA synthase</shortName>
    </alternativeName>
    <alternativeName>
        <fullName>8-amino-7-ketopelargonate synthase</fullName>
    </alternativeName>
    <alternativeName>
        <fullName>Alpha-oxoamine synthase</fullName>
    </alternativeName>
</protein>